<dbReference type="EMBL" id="AP009351">
    <property type="protein sequence ID" value="BAF66286.1"/>
    <property type="molecule type" value="Genomic_DNA"/>
</dbReference>
<dbReference type="RefSeq" id="WP_000864305.1">
    <property type="nucleotide sequence ID" value="NZ_JBBIAE010000007.1"/>
</dbReference>
<dbReference type="SMR" id="A6QD54"/>
<dbReference type="KEGG" id="sae:NWMN_0014"/>
<dbReference type="HOGENOM" id="CLU_078938_3_2_9"/>
<dbReference type="Proteomes" id="UP000006386">
    <property type="component" value="Chromosome"/>
</dbReference>
<dbReference type="GO" id="GO:1990904">
    <property type="term" value="C:ribonucleoprotein complex"/>
    <property type="evidence" value="ECO:0007669"/>
    <property type="project" value="UniProtKB-KW"/>
</dbReference>
<dbReference type="GO" id="GO:0005840">
    <property type="term" value="C:ribosome"/>
    <property type="evidence" value="ECO:0007669"/>
    <property type="project" value="UniProtKB-KW"/>
</dbReference>
<dbReference type="GO" id="GO:0019843">
    <property type="term" value="F:rRNA binding"/>
    <property type="evidence" value="ECO:0007669"/>
    <property type="project" value="UniProtKB-UniRule"/>
</dbReference>
<dbReference type="GO" id="GO:0003735">
    <property type="term" value="F:structural constituent of ribosome"/>
    <property type="evidence" value="ECO:0007669"/>
    <property type="project" value="InterPro"/>
</dbReference>
<dbReference type="GO" id="GO:0006412">
    <property type="term" value="P:translation"/>
    <property type="evidence" value="ECO:0007669"/>
    <property type="project" value="UniProtKB-UniRule"/>
</dbReference>
<dbReference type="FunFam" id="3.10.430.100:FF:000002">
    <property type="entry name" value="50S ribosomal protein L9"/>
    <property type="match status" value="1"/>
</dbReference>
<dbReference type="FunFam" id="3.40.5.10:FF:000002">
    <property type="entry name" value="50S ribosomal protein L9"/>
    <property type="match status" value="1"/>
</dbReference>
<dbReference type="Gene3D" id="3.10.430.100">
    <property type="entry name" value="Ribosomal protein L9, C-terminal domain"/>
    <property type="match status" value="1"/>
</dbReference>
<dbReference type="Gene3D" id="3.40.5.10">
    <property type="entry name" value="Ribosomal protein L9, N-terminal domain"/>
    <property type="match status" value="1"/>
</dbReference>
<dbReference type="HAMAP" id="MF_00503">
    <property type="entry name" value="Ribosomal_bL9"/>
    <property type="match status" value="1"/>
</dbReference>
<dbReference type="InterPro" id="IPR000244">
    <property type="entry name" value="Ribosomal_bL9"/>
</dbReference>
<dbReference type="InterPro" id="IPR009027">
    <property type="entry name" value="Ribosomal_bL9/RNase_H1_N"/>
</dbReference>
<dbReference type="InterPro" id="IPR020594">
    <property type="entry name" value="Ribosomal_bL9_bac/chp"/>
</dbReference>
<dbReference type="InterPro" id="IPR020069">
    <property type="entry name" value="Ribosomal_bL9_C"/>
</dbReference>
<dbReference type="InterPro" id="IPR036791">
    <property type="entry name" value="Ribosomal_bL9_C_sf"/>
</dbReference>
<dbReference type="InterPro" id="IPR020070">
    <property type="entry name" value="Ribosomal_bL9_N"/>
</dbReference>
<dbReference type="InterPro" id="IPR036935">
    <property type="entry name" value="Ribosomal_bL9_N_sf"/>
</dbReference>
<dbReference type="NCBIfam" id="TIGR00158">
    <property type="entry name" value="L9"/>
    <property type="match status" value="1"/>
</dbReference>
<dbReference type="PANTHER" id="PTHR21368">
    <property type="entry name" value="50S RIBOSOMAL PROTEIN L9"/>
    <property type="match status" value="1"/>
</dbReference>
<dbReference type="Pfam" id="PF03948">
    <property type="entry name" value="Ribosomal_L9_C"/>
    <property type="match status" value="1"/>
</dbReference>
<dbReference type="Pfam" id="PF01281">
    <property type="entry name" value="Ribosomal_L9_N"/>
    <property type="match status" value="1"/>
</dbReference>
<dbReference type="SUPFAM" id="SSF55658">
    <property type="entry name" value="L9 N-domain-like"/>
    <property type="match status" value="1"/>
</dbReference>
<dbReference type="SUPFAM" id="SSF55653">
    <property type="entry name" value="Ribosomal protein L9 C-domain"/>
    <property type="match status" value="1"/>
</dbReference>
<dbReference type="PROSITE" id="PS00651">
    <property type="entry name" value="RIBOSOMAL_L9"/>
    <property type="match status" value="1"/>
</dbReference>
<gene>
    <name evidence="1" type="primary">rplI</name>
    <name type="ordered locus">NWMN_0014</name>
</gene>
<reference key="1">
    <citation type="journal article" date="2008" name="J. Bacteriol.">
        <title>Genome sequence of Staphylococcus aureus strain Newman and comparative analysis of staphylococcal genomes: polymorphism and evolution of two major pathogenicity islands.</title>
        <authorList>
            <person name="Baba T."/>
            <person name="Bae T."/>
            <person name="Schneewind O."/>
            <person name="Takeuchi F."/>
            <person name="Hiramatsu K."/>
        </authorList>
    </citation>
    <scope>NUCLEOTIDE SEQUENCE [LARGE SCALE GENOMIC DNA]</scope>
    <source>
        <strain>Newman</strain>
    </source>
</reference>
<protein>
    <recommendedName>
        <fullName evidence="1">Large ribosomal subunit protein bL9</fullName>
    </recommendedName>
    <alternativeName>
        <fullName evidence="2">50S ribosomal protein L9</fullName>
    </alternativeName>
</protein>
<name>RL9_STAAE</name>
<organism>
    <name type="scientific">Staphylococcus aureus (strain Newman)</name>
    <dbReference type="NCBI Taxonomy" id="426430"/>
    <lineage>
        <taxon>Bacteria</taxon>
        <taxon>Bacillati</taxon>
        <taxon>Bacillota</taxon>
        <taxon>Bacilli</taxon>
        <taxon>Bacillales</taxon>
        <taxon>Staphylococcaceae</taxon>
        <taxon>Staphylococcus</taxon>
    </lineage>
</organism>
<accession>A6QD54</accession>
<proteinExistence type="inferred from homology"/>
<comment type="function">
    <text evidence="1">Binds to the 23S rRNA.</text>
</comment>
<comment type="similarity">
    <text evidence="1">Belongs to the bacterial ribosomal protein bL9 family.</text>
</comment>
<feature type="chain" id="PRO_1000072451" description="Large ribosomal subunit protein bL9">
    <location>
        <begin position="1"/>
        <end position="148"/>
    </location>
</feature>
<keyword id="KW-0687">Ribonucleoprotein</keyword>
<keyword id="KW-0689">Ribosomal protein</keyword>
<keyword id="KW-0694">RNA-binding</keyword>
<keyword id="KW-0699">rRNA-binding</keyword>
<evidence type="ECO:0000255" key="1">
    <source>
        <dbReference type="HAMAP-Rule" id="MF_00503"/>
    </source>
</evidence>
<evidence type="ECO:0000305" key="2"/>
<sequence>MKVIFTQDVKGKGKKGEVKEVPVGYANNFLLKKNYAVEATPGNLKQLELQKKRAKQERQQEIEDAKALKETLSNIEVEVSAKTGEGGKLFGSVSTKQIAEALKAQHDIKIDKRKMDLPNGIHSLGYTNVPVKLDKEVEGTIRVHTVEQ</sequence>